<keyword id="KW-0119">Carbohydrate metabolism</keyword>
<keyword id="KW-0378">Hydrolase</keyword>
<keyword id="KW-1185">Reference proteome</keyword>
<accession>P65515</accession>
<accession>Q8E0D5</accession>
<accession>Q8E609</accession>
<comment type="function">
    <text evidence="1">Catalyzes the reversible isomerization-deamination of glucosamine 6-phosphate (GlcN6P) to form fructose 6-phosphate (Fru6P) and ammonium ion.</text>
</comment>
<comment type="catalytic activity">
    <reaction evidence="1">
        <text>alpha-D-glucosamine 6-phosphate + H2O = beta-D-fructose 6-phosphate + NH4(+)</text>
        <dbReference type="Rhea" id="RHEA:12172"/>
        <dbReference type="ChEBI" id="CHEBI:15377"/>
        <dbReference type="ChEBI" id="CHEBI:28938"/>
        <dbReference type="ChEBI" id="CHEBI:57634"/>
        <dbReference type="ChEBI" id="CHEBI:75989"/>
        <dbReference type="EC" id="3.5.99.6"/>
    </reaction>
</comment>
<comment type="pathway">
    <text evidence="1">Amino-sugar metabolism; N-acetylneuraminate degradation; D-fructose 6-phosphate from N-acetylneuraminate: step 5/5.</text>
</comment>
<comment type="similarity">
    <text evidence="1">Belongs to the glucosamine/galactosamine-6-phosphate isomerase family. NagB subfamily.</text>
</comment>
<dbReference type="EC" id="3.5.99.6" evidence="1"/>
<dbReference type="EMBL" id="AE009948">
    <property type="protein sequence ID" value="AAM99686.1"/>
    <property type="molecule type" value="Genomic_DNA"/>
</dbReference>
<dbReference type="RefSeq" id="NP_687814.1">
    <property type="nucleotide sequence ID" value="NC_004116.1"/>
</dbReference>
<dbReference type="RefSeq" id="WP_001263956.1">
    <property type="nucleotide sequence ID" value="NC_004116.1"/>
</dbReference>
<dbReference type="SMR" id="P65515"/>
<dbReference type="STRING" id="208435.SAG0799"/>
<dbReference type="KEGG" id="sag:SAG0799"/>
<dbReference type="PATRIC" id="fig|208435.3.peg.806"/>
<dbReference type="HOGENOM" id="CLU_049611_1_0_9"/>
<dbReference type="OrthoDB" id="9791139at2"/>
<dbReference type="UniPathway" id="UPA00629">
    <property type="reaction ID" value="UER00684"/>
</dbReference>
<dbReference type="Proteomes" id="UP000000821">
    <property type="component" value="Chromosome"/>
</dbReference>
<dbReference type="GO" id="GO:0005737">
    <property type="term" value="C:cytoplasm"/>
    <property type="evidence" value="ECO:0007669"/>
    <property type="project" value="TreeGrafter"/>
</dbReference>
<dbReference type="GO" id="GO:0004342">
    <property type="term" value="F:glucosamine-6-phosphate deaminase activity"/>
    <property type="evidence" value="ECO:0007669"/>
    <property type="project" value="UniProtKB-UniRule"/>
</dbReference>
<dbReference type="GO" id="GO:0042802">
    <property type="term" value="F:identical protein binding"/>
    <property type="evidence" value="ECO:0007669"/>
    <property type="project" value="TreeGrafter"/>
</dbReference>
<dbReference type="GO" id="GO:0005975">
    <property type="term" value="P:carbohydrate metabolic process"/>
    <property type="evidence" value="ECO:0007669"/>
    <property type="project" value="InterPro"/>
</dbReference>
<dbReference type="GO" id="GO:0006043">
    <property type="term" value="P:glucosamine catabolic process"/>
    <property type="evidence" value="ECO:0007669"/>
    <property type="project" value="TreeGrafter"/>
</dbReference>
<dbReference type="GO" id="GO:0006046">
    <property type="term" value="P:N-acetylglucosamine catabolic process"/>
    <property type="evidence" value="ECO:0007669"/>
    <property type="project" value="TreeGrafter"/>
</dbReference>
<dbReference type="GO" id="GO:0019262">
    <property type="term" value="P:N-acetylneuraminate catabolic process"/>
    <property type="evidence" value="ECO:0007669"/>
    <property type="project" value="UniProtKB-UniRule"/>
</dbReference>
<dbReference type="CDD" id="cd01399">
    <property type="entry name" value="GlcN6P_deaminase"/>
    <property type="match status" value="1"/>
</dbReference>
<dbReference type="FunFam" id="3.40.50.1360:FF:000003">
    <property type="entry name" value="Glucosamine-6-phosphate deaminase"/>
    <property type="match status" value="1"/>
</dbReference>
<dbReference type="Gene3D" id="3.40.50.1360">
    <property type="match status" value="1"/>
</dbReference>
<dbReference type="HAMAP" id="MF_01241">
    <property type="entry name" value="GlcN6P_deamin"/>
    <property type="match status" value="1"/>
</dbReference>
<dbReference type="InterPro" id="IPR006148">
    <property type="entry name" value="Glc/Gal-6P_isomerase"/>
</dbReference>
<dbReference type="InterPro" id="IPR004547">
    <property type="entry name" value="Glucosamine6P_isomerase"/>
</dbReference>
<dbReference type="InterPro" id="IPR018321">
    <property type="entry name" value="Glucosamine6P_isomerase_CS"/>
</dbReference>
<dbReference type="InterPro" id="IPR037171">
    <property type="entry name" value="NagB/RpiA_transferase-like"/>
</dbReference>
<dbReference type="PANTHER" id="PTHR11280">
    <property type="entry name" value="GLUCOSAMINE-6-PHOSPHATE ISOMERASE"/>
    <property type="match status" value="1"/>
</dbReference>
<dbReference type="PANTHER" id="PTHR11280:SF5">
    <property type="entry name" value="GLUCOSAMINE-6-PHOSPHATE ISOMERASE"/>
    <property type="match status" value="1"/>
</dbReference>
<dbReference type="Pfam" id="PF01182">
    <property type="entry name" value="Glucosamine_iso"/>
    <property type="match status" value="1"/>
</dbReference>
<dbReference type="SUPFAM" id="SSF100950">
    <property type="entry name" value="NagB/RpiA/CoA transferase-like"/>
    <property type="match status" value="1"/>
</dbReference>
<dbReference type="PROSITE" id="PS01161">
    <property type="entry name" value="GLC_GALNAC_ISOMERASE"/>
    <property type="match status" value="1"/>
</dbReference>
<protein>
    <recommendedName>
        <fullName evidence="1">Glucosamine-6-phosphate deaminase</fullName>
        <ecNumber evidence="1">3.5.99.6</ecNumber>
    </recommendedName>
    <alternativeName>
        <fullName evidence="1">GlcN6P deaminase</fullName>
        <shortName evidence="1">GNPDA</shortName>
    </alternativeName>
    <alternativeName>
        <fullName evidence="1">Glucosamine-6-phosphate isomerase</fullName>
    </alternativeName>
</protein>
<name>NAGB_STRA5</name>
<organism>
    <name type="scientific">Streptococcus agalactiae serotype V (strain ATCC BAA-611 / 2603 V/R)</name>
    <dbReference type="NCBI Taxonomy" id="208435"/>
    <lineage>
        <taxon>Bacteria</taxon>
        <taxon>Bacillati</taxon>
        <taxon>Bacillota</taxon>
        <taxon>Bacilli</taxon>
        <taxon>Lactobacillales</taxon>
        <taxon>Streptococcaceae</taxon>
        <taxon>Streptococcus</taxon>
    </lineage>
</organism>
<evidence type="ECO:0000255" key="1">
    <source>
        <dbReference type="HAMAP-Rule" id="MF_01241"/>
    </source>
</evidence>
<sequence>MRVITVKNDIEGGKIAFTLLEEKMKAGAQTLGLATGSSPITFYEEIVKSNLDFSNMVSINLDEYVGIAASNDQSYSYFMHKHLFDAKPFKENNLPNGLAKDLKEEIKRYDAVINANPIDFQILGIGRNGHIGFNEPGTPFDITTHVVDLAPSTIEANSRFFNSIDDVPKQALSMGIGSIMKSKTIVLVAYGIEKAEAIASMIKGPITEDMPASILQKHDDVVIIVDEAAASKL</sequence>
<proteinExistence type="inferred from homology"/>
<reference key="1">
    <citation type="journal article" date="2002" name="Proc. Natl. Acad. Sci. U.S.A.">
        <title>Complete genome sequence and comparative genomic analysis of an emerging human pathogen, serotype V Streptococcus agalactiae.</title>
        <authorList>
            <person name="Tettelin H."/>
            <person name="Masignani V."/>
            <person name="Cieslewicz M.J."/>
            <person name="Eisen J.A."/>
            <person name="Peterson S.N."/>
            <person name="Wessels M.R."/>
            <person name="Paulsen I.T."/>
            <person name="Nelson K.E."/>
            <person name="Margarit I."/>
            <person name="Read T.D."/>
            <person name="Madoff L.C."/>
            <person name="Wolf A.M."/>
            <person name="Beanan M.J."/>
            <person name="Brinkac L.M."/>
            <person name="Daugherty S.C."/>
            <person name="DeBoy R.T."/>
            <person name="Durkin A.S."/>
            <person name="Kolonay J.F."/>
            <person name="Madupu R."/>
            <person name="Lewis M.R."/>
            <person name="Radune D."/>
            <person name="Fedorova N.B."/>
            <person name="Scanlan D."/>
            <person name="Khouri H.M."/>
            <person name="Mulligan S."/>
            <person name="Carty H.A."/>
            <person name="Cline R.T."/>
            <person name="Van Aken S.E."/>
            <person name="Gill J."/>
            <person name="Scarselli M."/>
            <person name="Mora M."/>
            <person name="Iacobini E.T."/>
            <person name="Brettoni C."/>
            <person name="Galli G."/>
            <person name="Mariani M."/>
            <person name="Vegni F."/>
            <person name="Maione D."/>
            <person name="Rinaudo D."/>
            <person name="Rappuoli R."/>
            <person name="Telford J.L."/>
            <person name="Kasper D.L."/>
            <person name="Grandi G."/>
            <person name="Fraser C.M."/>
        </authorList>
    </citation>
    <scope>NUCLEOTIDE SEQUENCE [LARGE SCALE GENOMIC DNA]</scope>
    <source>
        <strain>ATCC BAA-611 / 2603 V/R</strain>
    </source>
</reference>
<feature type="chain" id="PRO_0000160173" description="Glucosamine-6-phosphate deaminase">
    <location>
        <begin position="1"/>
        <end position="233"/>
    </location>
</feature>
<feature type="active site" description="Proton acceptor; for enolization step" evidence="1">
    <location>
        <position position="62"/>
    </location>
</feature>
<feature type="active site" description="For ring-opening step" evidence="1">
    <location>
        <position position="128"/>
    </location>
</feature>
<feature type="active site" description="Proton acceptor; for ring-opening step" evidence="1">
    <location>
        <position position="130"/>
    </location>
</feature>
<feature type="active site" description="For ring-opening step" evidence="1">
    <location>
        <position position="135"/>
    </location>
</feature>
<gene>
    <name evidence="1" type="primary">nagB</name>
    <name type="ordered locus">SAG0799</name>
</gene>